<organism>
    <name type="scientific">Arabidopsis thaliana</name>
    <name type="common">Mouse-ear cress</name>
    <dbReference type="NCBI Taxonomy" id="3702"/>
    <lineage>
        <taxon>Eukaryota</taxon>
        <taxon>Viridiplantae</taxon>
        <taxon>Streptophyta</taxon>
        <taxon>Embryophyta</taxon>
        <taxon>Tracheophyta</taxon>
        <taxon>Spermatophyta</taxon>
        <taxon>Magnoliopsida</taxon>
        <taxon>eudicotyledons</taxon>
        <taxon>Gunneridae</taxon>
        <taxon>Pentapetalae</taxon>
        <taxon>rosids</taxon>
        <taxon>malvids</taxon>
        <taxon>Brassicales</taxon>
        <taxon>Brassicaceae</taxon>
        <taxon>Camelineae</taxon>
        <taxon>Arabidopsis</taxon>
    </lineage>
</organism>
<evidence type="ECO:0000250" key="1"/>
<evidence type="ECO:0000255" key="2">
    <source>
        <dbReference type="PROSITE-ProRule" id="PRU01185"/>
    </source>
</evidence>
<evidence type="ECO:0000269" key="3">
    <source>
    </source>
</evidence>
<evidence type="ECO:0000269" key="4">
    <source>
    </source>
</evidence>
<evidence type="ECO:0000269" key="5">
    <source>
    </source>
</evidence>
<evidence type="ECO:0000269" key="6">
    <source>
    </source>
</evidence>
<evidence type="ECO:0000305" key="7"/>
<feature type="chain" id="PRO_0000419983" description="26S proteasome non-ATPase regulatory subunit 11 homolog">
    <location>
        <begin position="1"/>
        <end position="419"/>
    </location>
</feature>
<feature type="domain" description="PCI" evidence="2">
    <location>
        <begin position="217"/>
        <end position="388"/>
    </location>
</feature>
<feature type="cross-link" description="Glycyl lysine isopeptide (Lys-Gly) (interchain with G-Cter in ubiquitin)" evidence="5">
    <location>
        <position position="160"/>
    </location>
</feature>
<feature type="sequence conflict" description="In Ref. 2; AAP86661." evidence="7" ref="2">
    <original>T</original>
    <variation>I</variation>
    <location>
        <position position="55"/>
    </location>
</feature>
<reference key="1">
    <citation type="journal article" date="1999" name="J. Mol. Biol.">
        <title>Characterization of two subunits of Arabidopsis 19S proteasome regulatory complex and its possible interaction with the COP9 complex.</title>
        <authorList>
            <person name="Kwok S.F."/>
            <person name="Staub J.M."/>
            <person name="Deng X.-W."/>
        </authorList>
    </citation>
    <scope>NUCLEOTIDE SEQUENCE [MRNA]</scope>
    <scope>INTERACTION WITH CSN1</scope>
    <source>
        <strain>cv. Columbia</strain>
    </source>
</reference>
<reference key="2">
    <citation type="journal article" date="2004" name="J. Biol. Chem.">
        <title>Purification of the Arabidopsis 26 S proteasome: biochemical and molecular analyses revealed the presence of multiple isoforms.</title>
        <authorList>
            <person name="Yang P."/>
            <person name="Fu H."/>
            <person name="Walker J."/>
            <person name="Papa C.M."/>
            <person name="Smalle J."/>
            <person name="Ju Y.-M."/>
            <person name="Vierstra R.D."/>
        </authorList>
    </citation>
    <scope>NUCLEOTIDE SEQUENCE [MRNA]</scope>
    <scope>SUBUNIT</scope>
    <scope>IDENTIFICATION BY MASS SPECTROMETRY</scope>
    <scope>TISSUE SPECIFICITY</scope>
    <source>
        <strain>cv. Columbia</strain>
    </source>
</reference>
<reference key="3">
    <citation type="journal article" date="2000" name="Nature">
        <title>Sequence and analysis of chromosome 1 of the plant Arabidopsis thaliana.</title>
        <authorList>
            <person name="Theologis A."/>
            <person name="Ecker J.R."/>
            <person name="Palm C.J."/>
            <person name="Federspiel N.A."/>
            <person name="Kaul S."/>
            <person name="White O."/>
            <person name="Alonso J."/>
            <person name="Altafi H."/>
            <person name="Araujo R."/>
            <person name="Bowman C.L."/>
            <person name="Brooks S.Y."/>
            <person name="Buehler E."/>
            <person name="Chan A."/>
            <person name="Chao Q."/>
            <person name="Chen H."/>
            <person name="Cheuk R.F."/>
            <person name="Chin C.W."/>
            <person name="Chung M.K."/>
            <person name="Conn L."/>
            <person name="Conway A.B."/>
            <person name="Conway A.R."/>
            <person name="Creasy T.H."/>
            <person name="Dewar K."/>
            <person name="Dunn P."/>
            <person name="Etgu P."/>
            <person name="Feldblyum T.V."/>
            <person name="Feng J.-D."/>
            <person name="Fong B."/>
            <person name="Fujii C.Y."/>
            <person name="Gill J.E."/>
            <person name="Goldsmith A.D."/>
            <person name="Haas B."/>
            <person name="Hansen N.F."/>
            <person name="Hughes B."/>
            <person name="Huizar L."/>
            <person name="Hunter J.L."/>
            <person name="Jenkins J."/>
            <person name="Johnson-Hopson C."/>
            <person name="Khan S."/>
            <person name="Khaykin E."/>
            <person name="Kim C.J."/>
            <person name="Koo H.L."/>
            <person name="Kremenetskaia I."/>
            <person name="Kurtz D.B."/>
            <person name="Kwan A."/>
            <person name="Lam B."/>
            <person name="Langin-Hooper S."/>
            <person name="Lee A."/>
            <person name="Lee J.M."/>
            <person name="Lenz C.A."/>
            <person name="Li J.H."/>
            <person name="Li Y.-P."/>
            <person name="Lin X."/>
            <person name="Liu S.X."/>
            <person name="Liu Z.A."/>
            <person name="Luros J.S."/>
            <person name="Maiti R."/>
            <person name="Marziali A."/>
            <person name="Militscher J."/>
            <person name="Miranda M."/>
            <person name="Nguyen M."/>
            <person name="Nierman W.C."/>
            <person name="Osborne B.I."/>
            <person name="Pai G."/>
            <person name="Peterson J."/>
            <person name="Pham P.K."/>
            <person name="Rizzo M."/>
            <person name="Rooney T."/>
            <person name="Rowley D."/>
            <person name="Sakano H."/>
            <person name="Salzberg S.L."/>
            <person name="Schwartz J.R."/>
            <person name="Shinn P."/>
            <person name="Southwick A.M."/>
            <person name="Sun H."/>
            <person name="Tallon L.J."/>
            <person name="Tambunga G."/>
            <person name="Toriumi M.J."/>
            <person name="Town C.D."/>
            <person name="Utterback T."/>
            <person name="Van Aken S."/>
            <person name="Vaysberg M."/>
            <person name="Vysotskaia V.S."/>
            <person name="Walker M."/>
            <person name="Wu D."/>
            <person name="Yu G."/>
            <person name="Fraser C.M."/>
            <person name="Venter J.C."/>
            <person name="Davis R.W."/>
        </authorList>
    </citation>
    <scope>NUCLEOTIDE SEQUENCE [LARGE SCALE GENOMIC DNA]</scope>
    <source>
        <strain>cv. Columbia</strain>
    </source>
</reference>
<reference key="4">
    <citation type="journal article" date="2017" name="Plant J.">
        <title>Araport11: a complete reannotation of the Arabidopsis thaliana reference genome.</title>
        <authorList>
            <person name="Cheng C.Y."/>
            <person name="Krishnakumar V."/>
            <person name="Chan A.P."/>
            <person name="Thibaud-Nissen F."/>
            <person name="Schobel S."/>
            <person name="Town C.D."/>
        </authorList>
    </citation>
    <scope>GENOME REANNOTATION</scope>
    <source>
        <strain>cv. Columbia</strain>
    </source>
</reference>
<reference key="5">
    <citation type="journal article" date="2003" name="Science">
        <title>Empirical analysis of transcriptional activity in the Arabidopsis genome.</title>
        <authorList>
            <person name="Yamada K."/>
            <person name="Lim J."/>
            <person name="Dale J.M."/>
            <person name="Chen H."/>
            <person name="Shinn P."/>
            <person name="Palm C.J."/>
            <person name="Southwick A.M."/>
            <person name="Wu H.C."/>
            <person name="Kim C.J."/>
            <person name="Nguyen M."/>
            <person name="Pham P.K."/>
            <person name="Cheuk R.F."/>
            <person name="Karlin-Newmann G."/>
            <person name="Liu S.X."/>
            <person name="Lam B."/>
            <person name="Sakano H."/>
            <person name="Wu T."/>
            <person name="Yu G."/>
            <person name="Miranda M."/>
            <person name="Quach H.L."/>
            <person name="Tripp M."/>
            <person name="Chang C.H."/>
            <person name="Lee J.M."/>
            <person name="Toriumi M.J."/>
            <person name="Chan M.M."/>
            <person name="Tang C.C."/>
            <person name="Onodera C.S."/>
            <person name="Deng J.M."/>
            <person name="Akiyama K."/>
            <person name="Ansari Y."/>
            <person name="Arakawa T."/>
            <person name="Banh J."/>
            <person name="Banno F."/>
            <person name="Bowser L."/>
            <person name="Brooks S.Y."/>
            <person name="Carninci P."/>
            <person name="Chao Q."/>
            <person name="Choy N."/>
            <person name="Enju A."/>
            <person name="Goldsmith A.D."/>
            <person name="Gurjal M."/>
            <person name="Hansen N.F."/>
            <person name="Hayashizaki Y."/>
            <person name="Johnson-Hopson C."/>
            <person name="Hsuan V.W."/>
            <person name="Iida K."/>
            <person name="Karnes M."/>
            <person name="Khan S."/>
            <person name="Koesema E."/>
            <person name="Ishida J."/>
            <person name="Jiang P.X."/>
            <person name="Jones T."/>
            <person name="Kawai J."/>
            <person name="Kamiya A."/>
            <person name="Meyers C."/>
            <person name="Nakajima M."/>
            <person name="Narusaka M."/>
            <person name="Seki M."/>
            <person name="Sakurai T."/>
            <person name="Satou M."/>
            <person name="Tamse R."/>
            <person name="Vaysberg M."/>
            <person name="Wallender E.K."/>
            <person name="Wong C."/>
            <person name="Yamamura Y."/>
            <person name="Yuan S."/>
            <person name="Shinozaki K."/>
            <person name="Davis R.W."/>
            <person name="Theologis A."/>
            <person name="Ecker J.R."/>
        </authorList>
    </citation>
    <scope>NUCLEOTIDE SEQUENCE [LARGE SCALE MRNA]</scope>
    <source>
        <strain>cv. Columbia</strain>
    </source>
</reference>
<reference key="6">
    <citation type="journal article" date="2001" name="Mol. Biol. Cell">
        <title>The cellular level of PR500, a protein complex related to the 19S regulatory particle of the proteasome, is regulated in response to stresses in plants.</title>
        <authorList>
            <person name="Peng Z."/>
            <person name="Staub J.M."/>
            <person name="Serino G."/>
            <person name="Kwok S.F."/>
            <person name="Kurepa J."/>
            <person name="Bruce B.D."/>
            <person name="Vierstra R.D."/>
            <person name="Wei N."/>
            <person name="Deng X.W."/>
        </authorList>
    </citation>
    <scope>IDENTIFICATION IN THE 19S PROTEASOME REGULATORY COMPLEX</scope>
</reference>
<reference key="7">
    <citation type="journal article" date="2010" name="J. Biol. Chem.">
        <title>Affinity purification of the Arabidopsis 26 S proteasome reveals a diverse array of plant proteolytic complexes.</title>
        <authorList>
            <person name="Book A.J."/>
            <person name="Gladman N.P."/>
            <person name="Lee S.S."/>
            <person name="Scalf M."/>
            <person name="Smith L.M."/>
            <person name="Vierstra R.D."/>
        </authorList>
    </citation>
    <scope>IDENTIFICATION BY MASS SPECTROMETRY</scope>
    <scope>CHARACTERIZATION OF THE 26S PROTEASOME COMPLEX</scope>
    <scope>SUBUNIT</scope>
    <scope>UBIQUITINATION AT LYS-160</scope>
</reference>
<protein>
    <recommendedName>
        <fullName>26S proteasome non-ATPase regulatory subunit 11 homolog</fullName>
    </recommendedName>
    <alternativeName>
        <fullName>19S proteosome subunit 9</fullName>
        <shortName>AtS9</shortName>
    </alternativeName>
    <alternativeName>
        <fullName>26S proteasome regulatory subunit RPN6</fullName>
        <shortName>AtRPN6</shortName>
    </alternativeName>
    <alternativeName>
        <fullName>26S proteasome regulatory subunit S9 homolog</fullName>
    </alternativeName>
</protein>
<dbReference type="EMBL" id="AF083890">
    <property type="protein sequence ID" value="AAC34120.1"/>
    <property type="status" value="ALT_SEQ"/>
    <property type="molecule type" value="mRNA"/>
</dbReference>
<dbReference type="EMBL" id="AY230834">
    <property type="protein sequence ID" value="AAP86661.1"/>
    <property type="molecule type" value="mRNA"/>
</dbReference>
<dbReference type="EMBL" id="AY230835">
    <property type="protein sequence ID" value="AAP86662.1"/>
    <property type="molecule type" value="mRNA"/>
</dbReference>
<dbReference type="EMBL" id="AY230836">
    <property type="protein sequence ID" value="AAP86663.1"/>
    <property type="molecule type" value="mRNA"/>
</dbReference>
<dbReference type="EMBL" id="AY230837">
    <property type="protein sequence ID" value="AAP86664.1"/>
    <property type="molecule type" value="mRNA"/>
</dbReference>
<dbReference type="EMBL" id="AC021043">
    <property type="protein sequence ID" value="AAF88122.1"/>
    <property type="molecule type" value="Genomic_DNA"/>
</dbReference>
<dbReference type="EMBL" id="CP002684">
    <property type="protein sequence ID" value="AEE31050.1"/>
    <property type="molecule type" value="Genomic_DNA"/>
</dbReference>
<dbReference type="EMBL" id="CP002684">
    <property type="protein sequence ID" value="ANM61082.1"/>
    <property type="molecule type" value="Genomic_DNA"/>
</dbReference>
<dbReference type="EMBL" id="AF370203">
    <property type="protein sequence ID" value="AAK44018.1"/>
    <property type="molecule type" value="mRNA"/>
</dbReference>
<dbReference type="EMBL" id="AY056311">
    <property type="protein sequence ID" value="AAL07160.1"/>
    <property type="molecule type" value="mRNA"/>
</dbReference>
<dbReference type="PIR" id="A86414">
    <property type="entry name" value="A86414"/>
</dbReference>
<dbReference type="PIR" id="T52033">
    <property type="entry name" value="T52033"/>
</dbReference>
<dbReference type="RefSeq" id="NP_001323322.1">
    <property type="nucleotide sequence ID" value="NM_001332840.1"/>
</dbReference>
<dbReference type="RefSeq" id="NP_174210.1">
    <property type="nucleotide sequence ID" value="NM_102656.4"/>
</dbReference>
<dbReference type="SMR" id="Q9LP45"/>
<dbReference type="BioGRID" id="25024">
    <property type="interactions" value="90"/>
</dbReference>
<dbReference type="FunCoup" id="Q9LP45">
    <property type="interactions" value="4677"/>
</dbReference>
<dbReference type="IntAct" id="Q9LP45">
    <property type="interactions" value="2"/>
</dbReference>
<dbReference type="STRING" id="3702.Q9LP45"/>
<dbReference type="iPTMnet" id="Q9LP45"/>
<dbReference type="MetOSite" id="Q9LP45"/>
<dbReference type="PaxDb" id="3702-AT1G29150.1"/>
<dbReference type="ProMEX" id="Q9LP45"/>
<dbReference type="ProteomicsDB" id="226233"/>
<dbReference type="EnsemblPlants" id="AT1G29150.1">
    <property type="protein sequence ID" value="AT1G29150.1"/>
    <property type="gene ID" value="AT1G29150"/>
</dbReference>
<dbReference type="EnsemblPlants" id="AT1G29150.2">
    <property type="protein sequence ID" value="AT1G29150.2"/>
    <property type="gene ID" value="AT1G29150"/>
</dbReference>
<dbReference type="GeneID" id="839789"/>
<dbReference type="Gramene" id="AT1G29150.1">
    <property type="protein sequence ID" value="AT1G29150.1"/>
    <property type="gene ID" value="AT1G29150"/>
</dbReference>
<dbReference type="Gramene" id="AT1G29150.2">
    <property type="protein sequence ID" value="AT1G29150.2"/>
    <property type="gene ID" value="AT1G29150"/>
</dbReference>
<dbReference type="KEGG" id="ath:AT1G29150"/>
<dbReference type="Araport" id="AT1G29150"/>
<dbReference type="TAIR" id="AT1G29150">
    <property type="gene designation" value="ATS9"/>
</dbReference>
<dbReference type="eggNOG" id="KOG1463">
    <property type="taxonomic scope" value="Eukaryota"/>
</dbReference>
<dbReference type="HOGENOM" id="CLU_029573_2_1_1"/>
<dbReference type="InParanoid" id="Q9LP45"/>
<dbReference type="OMA" id="ESKIYHA"/>
<dbReference type="PhylomeDB" id="Q9LP45"/>
<dbReference type="PRO" id="PR:Q9LP45"/>
<dbReference type="Proteomes" id="UP000006548">
    <property type="component" value="Chromosome 1"/>
</dbReference>
<dbReference type="ExpressionAtlas" id="Q9LP45">
    <property type="expression patterns" value="baseline and differential"/>
</dbReference>
<dbReference type="GO" id="GO:0005634">
    <property type="term" value="C:nucleus"/>
    <property type="evidence" value="ECO:0007005"/>
    <property type="project" value="TAIR"/>
</dbReference>
<dbReference type="GO" id="GO:0009506">
    <property type="term" value="C:plasmodesma"/>
    <property type="evidence" value="ECO:0007005"/>
    <property type="project" value="TAIR"/>
</dbReference>
<dbReference type="GO" id="GO:0000502">
    <property type="term" value="C:proteasome complex"/>
    <property type="evidence" value="ECO:0000314"/>
    <property type="project" value="TAIR"/>
</dbReference>
<dbReference type="GO" id="GO:0030163">
    <property type="term" value="P:protein catabolic process"/>
    <property type="evidence" value="ECO:0000304"/>
    <property type="project" value="TAIR"/>
</dbReference>
<dbReference type="FunFam" id="1.25.40.570:FF:000007">
    <property type="entry name" value="26S proteasome non-ATPase regulatory subunit 11"/>
    <property type="match status" value="1"/>
</dbReference>
<dbReference type="Gene3D" id="1.25.40.570">
    <property type="match status" value="1"/>
</dbReference>
<dbReference type="InterPro" id="IPR050871">
    <property type="entry name" value="26S_Proteasome/COP9_Components"/>
</dbReference>
<dbReference type="InterPro" id="IPR000717">
    <property type="entry name" value="PCI_dom"/>
</dbReference>
<dbReference type="InterPro" id="IPR040780">
    <property type="entry name" value="Rpn6_C_helix"/>
</dbReference>
<dbReference type="InterPro" id="IPR040773">
    <property type="entry name" value="Rpn6_N"/>
</dbReference>
<dbReference type="InterPro" id="IPR011990">
    <property type="entry name" value="TPR-like_helical_dom_sf"/>
</dbReference>
<dbReference type="InterPro" id="IPR036390">
    <property type="entry name" value="WH_DNA-bd_sf"/>
</dbReference>
<dbReference type="PANTHER" id="PTHR10678">
    <property type="entry name" value="26S PROTEASOME NON-ATPASE REGULATORY SUBUNIT 11/COP9 SIGNALOSOME COMPLEX SUBUNIT 2"/>
    <property type="match status" value="1"/>
</dbReference>
<dbReference type="Pfam" id="PF01399">
    <property type="entry name" value="PCI"/>
    <property type="match status" value="1"/>
</dbReference>
<dbReference type="Pfam" id="PF18503">
    <property type="entry name" value="RPN6_C_helix"/>
    <property type="match status" value="1"/>
</dbReference>
<dbReference type="Pfam" id="PF18055">
    <property type="entry name" value="RPN6_N"/>
    <property type="match status" value="1"/>
</dbReference>
<dbReference type="SMART" id="SM00753">
    <property type="entry name" value="PAM"/>
    <property type="match status" value="1"/>
</dbReference>
<dbReference type="SMART" id="SM00088">
    <property type="entry name" value="PINT"/>
    <property type="match status" value="1"/>
</dbReference>
<dbReference type="SUPFAM" id="SSF48452">
    <property type="entry name" value="TPR-like"/>
    <property type="match status" value="1"/>
</dbReference>
<dbReference type="SUPFAM" id="SSF46785">
    <property type="entry name" value="Winged helix' DNA-binding domain"/>
    <property type="match status" value="1"/>
</dbReference>
<dbReference type="PROSITE" id="PS50250">
    <property type="entry name" value="PCI"/>
    <property type="match status" value="1"/>
</dbReference>
<gene>
    <name type="primary">RPN6</name>
    <name type="synonym">ATS9</name>
    <name type="synonym">RPN6A</name>
    <name type="ordered locus">At1g29150</name>
    <name type="ORF">F28N24.15</name>
</gene>
<sequence length="419" mass="46749">MVSYRATTETISLALEANSSEAITILYQVLEDPSSSPEAIRIKEQAITNLCDRLTEEKRGEDLRKLLTKLRPFFSLIPKAKTAKIVRGIIDAVAKIPGTTDLQITLCKEMVEWTRAEKRTFLRQRVEARLAALLMENKEYVEALALLSTLVKEVRRLDDKLLLVDIDLLESKLHFSLRNLPKAKAALTAARTAANAIYVPPAQQGTIDLQSGILHAEEKDYKTGYSYFFEAFESFNALGDPRAVFSLKYMLLCKIMVSQADDVAGIISSKAGLQYVGPDLDAMKAVADAHSKRSLKLFENALRDYKAQLEDDPIVHRHLSSLYDTLLEQNLCRLIEPFSRVEIAHIAELIGLPLDHVEKKLSQMILDKKFAGTLDQGAGCLIIFEDPKADAIYSATLETIANMGKVVDSLYVRSAKIMS</sequence>
<proteinExistence type="evidence at protein level"/>
<keyword id="KW-1017">Isopeptide bond</keyword>
<keyword id="KW-0647">Proteasome</keyword>
<keyword id="KW-1185">Reference proteome</keyword>
<keyword id="KW-0832">Ubl conjugation</keyword>
<name>PSD11_ARATH</name>
<comment type="function">
    <text evidence="1">Component of the lid subcomplex of the 26S proteasome, a multiprotein complex involved in the ATP-dependent degradation of ubiquitinated proteins. In the complex, RPN6A is required for proteasome assembly (By similarity).</text>
</comment>
<comment type="subunit">
    <text evidence="3 4 5 6">Component of the 19S regulatory particle (RP/PA700) lid subcomplex of the 26S proteasome. The 26S proteasome is composed of a core protease (CP), known as the 20S proteasome, capped at one or both ends by the 19S regulatory particle (RP/PA700). The RP/PA700 complex is composed of at least 17 different subunits in two subcomplexes, the base and the lid, which form the portions proximal and distal to the 20S proteolytic core, respectively. Interacts with CSN1.</text>
</comment>
<comment type="tissue specificity">
    <text evidence="4">Ubiquitous with highest expression in flowers.</text>
</comment>
<comment type="similarity">
    <text evidence="7">Belongs to the proteasome subunit S9 family.</text>
</comment>
<comment type="sequence caution" evidence="7">
    <conflict type="miscellaneous discrepancy">
        <sequence resource="EMBL-CDS" id="AAC34120"/>
    </conflict>
    <text>Sequencing errors.</text>
</comment>
<accession>Q9LP45</accession>
<accession>O81694</accession>
<accession>Q6XJG1</accession>
<accession>Q6XJG4</accession>